<evidence type="ECO:0000255" key="1">
    <source>
        <dbReference type="HAMAP-Rule" id="MF_00171"/>
    </source>
</evidence>
<dbReference type="EC" id="5.4.99.12" evidence="1"/>
<dbReference type="EMBL" id="CU928160">
    <property type="protein sequence ID" value="CAQ99237.1"/>
    <property type="molecule type" value="Genomic_DNA"/>
</dbReference>
<dbReference type="RefSeq" id="WP_001283581.1">
    <property type="nucleotide sequence ID" value="NC_011741.1"/>
</dbReference>
<dbReference type="SMR" id="B7M6J9"/>
<dbReference type="GeneID" id="75202599"/>
<dbReference type="KEGG" id="ecr:ECIAI1_2395"/>
<dbReference type="HOGENOM" id="CLU_014673_0_2_6"/>
<dbReference type="GO" id="GO:0003723">
    <property type="term" value="F:RNA binding"/>
    <property type="evidence" value="ECO:0007669"/>
    <property type="project" value="InterPro"/>
</dbReference>
<dbReference type="GO" id="GO:0160147">
    <property type="term" value="F:tRNA pseudouridine(38-40) synthase activity"/>
    <property type="evidence" value="ECO:0007669"/>
    <property type="project" value="UniProtKB-EC"/>
</dbReference>
<dbReference type="GO" id="GO:0031119">
    <property type="term" value="P:tRNA pseudouridine synthesis"/>
    <property type="evidence" value="ECO:0007669"/>
    <property type="project" value="UniProtKB-UniRule"/>
</dbReference>
<dbReference type="CDD" id="cd02570">
    <property type="entry name" value="PseudoU_synth_EcTruA"/>
    <property type="match status" value="1"/>
</dbReference>
<dbReference type="FunFam" id="3.30.70.580:FF:000001">
    <property type="entry name" value="tRNA pseudouridine synthase A"/>
    <property type="match status" value="1"/>
</dbReference>
<dbReference type="FunFam" id="3.30.70.660:FF:000001">
    <property type="entry name" value="tRNA pseudouridine synthase A"/>
    <property type="match status" value="1"/>
</dbReference>
<dbReference type="Gene3D" id="3.30.70.660">
    <property type="entry name" value="Pseudouridine synthase I, catalytic domain, C-terminal subdomain"/>
    <property type="match status" value="1"/>
</dbReference>
<dbReference type="Gene3D" id="3.30.70.580">
    <property type="entry name" value="Pseudouridine synthase I, catalytic domain, N-terminal subdomain"/>
    <property type="match status" value="1"/>
</dbReference>
<dbReference type="HAMAP" id="MF_00171">
    <property type="entry name" value="TruA"/>
    <property type="match status" value="1"/>
</dbReference>
<dbReference type="InterPro" id="IPR020103">
    <property type="entry name" value="PsdUridine_synth_cat_dom_sf"/>
</dbReference>
<dbReference type="InterPro" id="IPR001406">
    <property type="entry name" value="PsdUridine_synth_TruA"/>
</dbReference>
<dbReference type="InterPro" id="IPR020097">
    <property type="entry name" value="PsdUridine_synth_TruA_a/b_dom"/>
</dbReference>
<dbReference type="InterPro" id="IPR020095">
    <property type="entry name" value="PsdUridine_synth_TruA_C"/>
</dbReference>
<dbReference type="InterPro" id="IPR020094">
    <property type="entry name" value="TruA/RsuA/RluB/E/F_N"/>
</dbReference>
<dbReference type="NCBIfam" id="TIGR00071">
    <property type="entry name" value="hisT_truA"/>
    <property type="match status" value="1"/>
</dbReference>
<dbReference type="PANTHER" id="PTHR11142">
    <property type="entry name" value="PSEUDOURIDYLATE SYNTHASE"/>
    <property type="match status" value="1"/>
</dbReference>
<dbReference type="PANTHER" id="PTHR11142:SF0">
    <property type="entry name" value="TRNA PSEUDOURIDINE SYNTHASE-LIKE 1"/>
    <property type="match status" value="1"/>
</dbReference>
<dbReference type="Pfam" id="PF01416">
    <property type="entry name" value="PseudoU_synth_1"/>
    <property type="match status" value="2"/>
</dbReference>
<dbReference type="PIRSF" id="PIRSF001430">
    <property type="entry name" value="tRNA_psdUrid_synth"/>
    <property type="match status" value="1"/>
</dbReference>
<dbReference type="SUPFAM" id="SSF55120">
    <property type="entry name" value="Pseudouridine synthase"/>
    <property type="match status" value="1"/>
</dbReference>
<name>TRUA_ECO8A</name>
<sequence>MSDQQQLPVYKIALGIEYDGSKYYGWQRQNEVRSVQEKLEKALSQVANEPITVFCAGRTDAGVHGTGQVVHFETTAQRKDAAWTLGVNANLPGDIAVRWVKAVPDDFHARFSATARRYRYIIYNHRLRPAVLSKGVTHFYEPLDAERMHRAAQCLLGENDFTSFRAVQCQSRTPWRNVMHINVTRHGPYVVVDIKANAFVHHMVRNIVGSLMEVGAHNQPESWIAELLAAKDRTLAAATAKAEGLYLVAVDYPDRYDLPKPPMGPLFLAD</sequence>
<accession>B7M6J9</accession>
<proteinExistence type="inferred from homology"/>
<gene>
    <name evidence="1" type="primary">truA</name>
    <name type="ordered locus">ECIAI1_2395</name>
</gene>
<organism>
    <name type="scientific">Escherichia coli O8 (strain IAI1)</name>
    <dbReference type="NCBI Taxonomy" id="585034"/>
    <lineage>
        <taxon>Bacteria</taxon>
        <taxon>Pseudomonadati</taxon>
        <taxon>Pseudomonadota</taxon>
        <taxon>Gammaproteobacteria</taxon>
        <taxon>Enterobacterales</taxon>
        <taxon>Enterobacteriaceae</taxon>
        <taxon>Escherichia</taxon>
    </lineage>
</organism>
<reference key="1">
    <citation type="journal article" date="2009" name="PLoS Genet.">
        <title>Organised genome dynamics in the Escherichia coli species results in highly diverse adaptive paths.</title>
        <authorList>
            <person name="Touchon M."/>
            <person name="Hoede C."/>
            <person name="Tenaillon O."/>
            <person name="Barbe V."/>
            <person name="Baeriswyl S."/>
            <person name="Bidet P."/>
            <person name="Bingen E."/>
            <person name="Bonacorsi S."/>
            <person name="Bouchier C."/>
            <person name="Bouvet O."/>
            <person name="Calteau A."/>
            <person name="Chiapello H."/>
            <person name="Clermont O."/>
            <person name="Cruveiller S."/>
            <person name="Danchin A."/>
            <person name="Diard M."/>
            <person name="Dossat C."/>
            <person name="Karoui M.E."/>
            <person name="Frapy E."/>
            <person name="Garry L."/>
            <person name="Ghigo J.M."/>
            <person name="Gilles A.M."/>
            <person name="Johnson J."/>
            <person name="Le Bouguenec C."/>
            <person name="Lescat M."/>
            <person name="Mangenot S."/>
            <person name="Martinez-Jehanne V."/>
            <person name="Matic I."/>
            <person name="Nassif X."/>
            <person name="Oztas S."/>
            <person name="Petit M.A."/>
            <person name="Pichon C."/>
            <person name="Rouy Z."/>
            <person name="Ruf C.S."/>
            <person name="Schneider D."/>
            <person name="Tourret J."/>
            <person name="Vacherie B."/>
            <person name="Vallenet D."/>
            <person name="Medigue C."/>
            <person name="Rocha E.P.C."/>
            <person name="Denamur E."/>
        </authorList>
    </citation>
    <scope>NUCLEOTIDE SEQUENCE [LARGE SCALE GENOMIC DNA]</scope>
    <source>
        <strain>IAI1</strain>
    </source>
</reference>
<comment type="function">
    <text evidence="1">Formation of pseudouridine at positions 38, 39 and 40 in the anticodon stem and loop of transfer RNAs.</text>
</comment>
<comment type="catalytic activity">
    <reaction evidence="1">
        <text>uridine(38/39/40) in tRNA = pseudouridine(38/39/40) in tRNA</text>
        <dbReference type="Rhea" id="RHEA:22376"/>
        <dbReference type="Rhea" id="RHEA-COMP:10085"/>
        <dbReference type="Rhea" id="RHEA-COMP:10087"/>
        <dbReference type="ChEBI" id="CHEBI:65314"/>
        <dbReference type="ChEBI" id="CHEBI:65315"/>
        <dbReference type="EC" id="5.4.99.12"/>
    </reaction>
</comment>
<comment type="subunit">
    <text evidence="1">Homodimer.</text>
</comment>
<comment type="similarity">
    <text evidence="1">Belongs to the tRNA pseudouridine synthase TruA family.</text>
</comment>
<protein>
    <recommendedName>
        <fullName evidence="1">tRNA pseudouridine synthase A</fullName>
        <ecNumber evidence="1">5.4.99.12</ecNumber>
    </recommendedName>
    <alternativeName>
        <fullName evidence="1">tRNA pseudouridine(38-40) synthase</fullName>
    </alternativeName>
    <alternativeName>
        <fullName evidence="1">tRNA pseudouridylate synthase I</fullName>
    </alternativeName>
    <alternativeName>
        <fullName evidence="1">tRNA-uridine isomerase I</fullName>
    </alternativeName>
</protein>
<feature type="chain" id="PRO_1000194555" description="tRNA pseudouridine synthase A">
    <location>
        <begin position="1"/>
        <end position="270"/>
    </location>
</feature>
<feature type="region of interest" description="RNA binding" evidence="1">
    <location>
        <begin position="107"/>
        <end position="111"/>
    </location>
</feature>
<feature type="region of interest" description="Interaction with tRNA" evidence="1">
    <location>
        <begin position="168"/>
        <end position="172"/>
    </location>
</feature>
<feature type="active site" description="Nucleophile" evidence="1">
    <location>
        <position position="60"/>
    </location>
</feature>
<feature type="binding site" evidence="1">
    <location>
        <position position="118"/>
    </location>
    <ligand>
        <name>substrate</name>
    </ligand>
</feature>
<feature type="site" description="Interaction with tRNA; Important for base-flipping" evidence="1">
    <location>
        <position position="58"/>
    </location>
</feature>
<feature type="site" description="Interaction with tRNA" evidence="1">
    <location>
        <position position="78"/>
    </location>
</feature>
<feature type="site" description="Interaction with tRNA" evidence="1">
    <location>
        <position position="110"/>
    </location>
</feature>
<feature type="site" description="Interaction with tRNA" evidence="1">
    <location>
        <position position="126"/>
    </location>
</feature>
<feature type="site" description="Interaction with tRNA" evidence="1">
    <location>
        <position position="139"/>
    </location>
</feature>
<keyword id="KW-0413">Isomerase</keyword>
<keyword id="KW-0819">tRNA processing</keyword>